<name>LEU1_TOLAT</name>
<feature type="chain" id="PRO_1000213323" description="2-isopropylmalate synthase">
    <location>
        <begin position="1"/>
        <end position="521"/>
    </location>
</feature>
<feature type="domain" description="Pyruvate carboxyltransferase" evidence="1">
    <location>
        <begin position="5"/>
        <end position="267"/>
    </location>
</feature>
<feature type="region of interest" description="Regulatory domain" evidence="1">
    <location>
        <begin position="392"/>
        <end position="521"/>
    </location>
</feature>
<feature type="binding site" evidence="1">
    <location>
        <position position="14"/>
    </location>
    <ligand>
        <name>Mn(2+)</name>
        <dbReference type="ChEBI" id="CHEBI:29035"/>
    </ligand>
</feature>
<feature type="binding site" evidence="1">
    <location>
        <position position="202"/>
    </location>
    <ligand>
        <name>Mn(2+)</name>
        <dbReference type="ChEBI" id="CHEBI:29035"/>
    </ligand>
</feature>
<feature type="binding site" evidence="1">
    <location>
        <position position="204"/>
    </location>
    <ligand>
        <name>Mn(2+)</name>
        <dbReference type="ChEBI" id="CHEBI:29035"/>
    </ligand>
</feature>
<feature type="binding site" evidence="1">
    <location>
        <position position="238"/>
    </location>
    <ligand>
        <name>Mn(2+)</name>
        <dbReference type="ChEBI" id="CHEBI:29035"/>
    </ligand>
</feature>
<comment type="function">
    <text evidence="1">Catalyzes the condensation of the acetyl group of acetyl-CoA with 3-methyl-2-oxobutanoate (2-ketoisovalerate) to form 3-carboxy-3-hydroxy-4-methylpentanoate (2-isopropylmalate).</text>
</comment>
<comment type="catalytic activity">
    <reaction evidence="1">
        <text>3-methyl-2-oxobutanoate + acetyl-CoA + H2O = (2S)-2-isopropylmalate + CoA + H(+)</text>
        <dbReference type="Rhea" id="RHEA:21524"/>
        <dbReference type="ChEBI" id="CHEBI:1178"/>
        <dbReference type="ChEBI" id="CHEBI:11851"/>
        <dbReference type="ChEBI" id="CHEBI:15377"/>
        <dbReference type="ChEBI" id="CHEBI:15378"/>
        <dbReference type="ChEBI" id="CHEBI:57287"/>
        <dbReference type="ChEBI" id="CHEBI:57288"/>
        <dbReference type="EC" id="2.3.3.13"/>
    </reaction>
</comment>
<comment type="cofactor">
    <cofactor evidence="1">
        <name>Mn(2+)</name>
        <dbReference type="ChEBI" id="CHEBI:29035"/>
    </cofactor>
</comment>
<comment type="pathway">
    <text evidence="1">Amino-acid biosynthesis; L-leucine biosynthesis; L-leucine from 3-methyl-2-oxobutanoate: step 1/4.</text>
</comment>
<comment type="subunit">
    <text evidence="1">Homodimer.</text>
</comment>
<comment type="subcellular location">
    <subcellularLocation>
        <location evidence="1">Cytoplasm</location>
    </subcellularLocation>
</comment>
<comment type="similarity">
    <text evidence="1">Belongs to the alpha-IPM synthase/homocitrate synthase family. LeuA type 1 subfamily.</text>
</comment>
<organism>
    <name type="scientific">Tolumonas auensis (strain DSM 9187 / NBRC 110442 / TA 4)</name>
    <dbReference type="NCBI Taxonomy" id="595494"/>
    <lineage>
        <taxon>Bacteria</taxon>
        <taxon>Pseudomonadati</taxon>
        <taxon>Pseudomonadota</taxon>
        <taxon>Gammaproteobacteria</taxon>
        <taxon>Aeromonadales</taxon>
        <taxon>Aeromonadaceae</taxon>
        <taxon>Tolumonas</taxon>
    </lineage>
</organism>
<accession>C4LAV7</accession>
<sequence>MSDRVIIFDTTLRDGEQALPASLTVREKLQIALALERLGVDVMEVGFPVSSPGDFESVQTIARQIKNSRVCALSRALQKDIDAAAEALKVADQFRIHTFLATSTIHVESKLKKSFEDVLEMGINAVKYARRFTDDVEFSCEDAGRTPIDNLCRMVEAAINAGARTINIPDTVGYTIPSEFGGIIHNLFNRVPNIDKAVISVHCHDDLGLSVANSISAVQMGARQVECTINGIGERAGNTSLEEVAMILRTRQDLIGVHTNIKHQEIHRTSQLVSQLCNMPVQPNKAIVGANAFSHSSGIHQDGVLKAKNTYEIITPESVGLNQNTLNLTSRSGRHVIKHRLALLGYPEGSYDLDQIYTSFLQLADKKGQVFDYDLEALLFFSQIQEEPEHFKLNYLSVQSGGSIMATASVRMKVGDEEVTEAATGNGPVDAVYQCINRITGYEINISKYDLKSKGIGKDALGQVDIVAEFKGRKFHGMGLATDIVESSAQALVHVINNIYRALQVAEHKERFAQKTVMETL</sequence>
<reference key="1">
    <citation type="submission" date="2009-05" db="EMBL/GenBank/DDBJ databases">
        <title>Complete sequence of Tolumonas auensis DSM 9187.</title>
        <authorList>
            <consortium name="US DOE Joint Genome Institute"/>
            <person name="Lucas S."/>
            <person name="Copeland A."/>
            <person name="Lapidus A."/>
            <person name="Glavina del Rio T."/>
            <person name="Tice H."/>
            <person name="Bruce D."/>
            <person name="Goodwin L."/>
            <person name="Pitluck S."/>
            <person name="Chertkov O."/>
            <person name="Brettin T."/>
            <person name="Detter J.C."/>
            <person name="Han C."/>
            <person name="Larimer F."/>
            <person name="Land M."/>
            <person name="Hauser L."/>
            <person name="Kyrpides N."/>
            <person name="Mikhailova N."/>
            <person name="Spring S."/>
            <person name="Beller H."/>
        </authorList>
    </citation>
    <scope>NUCLEOTIDE SEQUENCE [LARGE SCALE GENOMIC DNA]</scope>
    <source>
        <strain>DSM 9187 / NBRC 110442 / TA 4</strain>
    </source>
</reference>
<protein>
    <recommendedName>
        <fullName evidence="1">2-isopropylmalate synthase</fullName>
        <ecNumber evidence="1">2.3.3.13</ecNumber>
    </recommendedName>
    <alternativeName>
        <fullName evidence="1">Alpha-IPM synthase</fullName>
    </alternativeName>
    <alternativeName>
        <fullName evidence="1">Alpha-isopropylmalate synthase</fullName>
    </alternativeName>
</protein>
<evidence type="ECO:0000255" key="1">
    <source>
        <dbReference type="HAMAP-Rule" id="MF_01025"/>
    </source>
</evidence>
<dbReference type="EC" id="2.3.3.13" evidence="1"/>
<dbReference type="EMBL" id="CP001616">
    <property type="protein sequence ID" value="ACQ92311.1"/>
    <property type="molecule type" value="Genomic_DNA"/>
</dbReference>
<dbReference type="RefSeq" id="WP_012728910.1">
    <property type="nucleotide sequence ID" value="NC_012691.1"/>
</dbReference>
<dbReference type="SMR" id="C4LAV7"/>
<dbReference type="STRING" id="595494.Tola_0682"/>
<dbReference type="KEGG" id="tau:Tola_0682"/>
<dbReference type="eggNOG" id="COG0119">
    <property type="taxonomic scope" value="Bacteria"/>
</dbReference>
<dbReference type="HOGENOM" id="CLU_022158_0_1_6"/>
<dbReference type="OrthoDB" id="9803573at2"/>
<dbReference type="UniPathway" id="UPA00048">
    <property type="reaction ID" value="UER00070"/>
</dbReference>
<dbReference type="Proteomes" id="UP000009073">
    <property type="component" value="Chromosome"/>
</dbReference>
<dbReference type="GO" id="GO:0005829">
    <property type="term" value="C:cytosol"/>
    <property type="evidence" value="ECO:0007669"/>
    <property type="project" value="TreeGrafter"/>
</dbReference>
<dbReference type="GO" id="GO:0003852">
    <property type="term" value="F:2-isopropylmalate synthase activity"/>
    <property type="evidence" value="ECO:0007669"/>
    <property type="project" value="UniProtKB-UniRule"/>
</dbReference>
<dbReference type="GO" id="GO:0003985">
    <property type="term" value="F:acetyl-CoA C-acetyltransferase activity"/>
    <property type="evidence" value="ECO:0007669"/>
    <property type="project" value="UniProtKB-UniRule"/>
</dbReference>
<dbReference type="GO" id="GO:0030145">
    <property type="term" value="F:manganese ion binding"/>
    <property type="evidence" value="ECO:0007669"/>
    <property type="project" value="UniProtKB-UniRule"/>
</dbReference>
<dbReference type="GO" id="GO:0009098">
    <property type="term" value="P:L-leucine biosynthetic process"/>
    <property type="evidence" value="ECO:0007669"/>
    <property type="project" value="UniProtKB-UniRule"/>
</dbReference>
<dbReference type="CDD" id="cd07940">
    <property type="entry name" value="DRE_TIM_IPMS"/>
    <property type="match status" value="1"/>
</dbReference>
<dbReference type="FunFam" id="1.10.238.260:FF:000001">
    <property type="entry name" value="2-isopropylmalate synthase"/>
    <property type="match status" value="1"/>
</dbReference>
<dbReference type="FunFam" id="3.20.20.70:FF:000010">
    <property type="entry name" value="2-isopropylmalate synthase"/>
    <property type="match status" value="1"/>
</dbReference>
<dbReference type="FunFam" id="3.30.160.270:FF:000001">
    <property type="entry name" value="2-isopropylmalate synthase"/>
    <property type="match status" value="1"/>
</dbReference>
<dbReference type="Gene3D" id="1.10.238.260">
    <property type="match status" value="1"/>
</dbReference>
<dbReference type="Gene3D" id="3.30.160.270">
    <property type="match status" value="1"/>
</dbReference>
<dbReference type="Gene3D" id="3.20.20.70">
    <property type="entry name" value="Aldolase class I"/>
    <property type="match status" value="1"/>
</dbReference>
<dbReference type="HAMAP" id="MF_01025">
    <property type="entry name" value="LeuA_type1"/>
    <property type="match status" value="1"/>
</dbReference>
<dbReference type="InterPro" id="IPR050073">
    <property type="entry name" value="2-IPM_HCS-like"/>
</dbReference>
<dbReference type="InterPro" id="IPR013709">
    <property type="entry name" value="2-isopropylmalate_synth_dimer"/>
</dbReference>
<dbReference type="InterPro" id="IPR002034">
    <property type="entry name" value="AIPM/Hcit_synth_CS"/>
</dbReference>
<dbReference type="InterPro" id="IPR013785">
    <property type="entry name" value="Aldolase_TIM"/>
</dbReference>
<dbReference type="InterPro" id="IPR054691">
    <property type="entry name" value="LeuA/HCS_post-cat"/>
</dbReference>
<dbReference type="InterPro" id="IPR036230">
    <property type="entry name" value="LeuA_allosteric_dom_sf"/>
</dbReference>
<dbReference type="InterPro" id="IPR005671">
    <property type="entry name" value="LeuA_bact_synth"/>
</dbReference>
<dbReference type="InterPro" id="IPR000891">
    <property type="entry name" value="PYR_CT"/>
</dbReference>
<dbReference type="NCBIfam" id="TIGR00973">
    <property type="entry name" value="leuA_bact"/>
    <property type="match status" value="1"/>
</dbReference>
<dbReference type="NCBIfam" id="NF002084">
    <property type="entry name" value="PRK00915.1-1"/>
    <property type="match status" value="1"/>
</dbReference>
<dbReference type="NCBIfam" id="NF002086">
    <property type="entry name" value="PRK00915.1-3"/>
    <property type="match status" value="1"/>
</dbReference>
<dbReference type="PANTHER" id="PTHR10277:SF9">
    <property type="entry name" value="2-ISOPROPYLMALATE SYNTHASE 1, CHLOROPLASTIC-RELATED"/>
    <property type="match status" value="1"/>
</dbReference>
<dbReference type="PANTHER" id="PTHR10277">
    <property type="entry name" value="HOMOCITRATE SYNTHASE-RELATED"/>
    <property type="match status" value="1"/>
</dbReference>
<dbReference type="Pfam" id="PF22617">
    <property type="entry name" value="HCS_D2"/>
    <property type="match status" value="1"/>
</dbReference>
<dbReference type="Pfam" id="PF00682">
    <property type="entry name" value="HMGL-like"/>
    <property type="match status" value="1"/>
</dbReference>
<dbReference type="Pfam" id="PF08502">
    <property type="entry name" value="LeuA_dimer"/>
    <property type="match status" value="1"/>
</dbReference>
<dbReference type="SMART" id="SM00917">
    <property type="entry name" value="LeuA_dimer"/>
    <property type="match status" value="1"/>
</dbReference>
<dbReference type="SUPFAM" id="SSF110921">
    <property type="entry name" value="2-isopropylmalate synthase LeuA, allosteric (dimerisation) domain"/>
    <property type="match status" value="1"/>
</dbReference>
<dbReference type="SUPFAM" id="SSF51569">
    <property type="entry name" value="Aldolase"/>
    <property type="match status" value="1"/>
</dbReference>
<dbReference type="PROSITE" id="PS00815">
    <property type="entry name" value="AIPM_HOMOCIT_SYNTH_1"/>
    <property type="match status" value="1"/>
</dbReference>
<dbReference type="PROSITE" id="PS00816">
    <property type="entry name" value="AIPM_HOMOCIT_SYNTH_2"/>
    <property type="match status" value="1"/>
</dbReference>
<dbReference type="PROSITE" id="PS50991">
    <property type="entry name" value="PYR_CT"/>
    <property type="match status" value="1"/>
</dbReference>
<proteinExistence type="inferred from homology"/>
<gene>
    <name evidence="1" type="primary">leuA</name>
    <name type="ordered locus">Tola_0682</name>
</gene>
<keyword id="KW-0028">Amino-acid biosynthesis</keyword>
<keyword id="KW-0100">Branched-chain amino acid biosynthesis</keyword>
<keyword id="KW-0963">Cytoplasm</keyword>
<keyword id="KW-0432">Leucine biosynthesis</keyword>
<keyword id="KW-0464">Manganese</keyword>
<keyword id="KW-0479">Metal-binding</keyword>
<keyword id="KW-1185">Reference proteome</keyword>
<keyword id="KW-0808">Transferase</keyword>